<protein>
    <recommendedName>
        <fullName evidence="1">Arginine biosynthesis bifunctional protein ArgJ, mitochondrial</fullName>
    </recommendedName>
    <domain>
        <recommendedName>
            <fullName evidence="1">Glutamate N-acetyltransferase</fullName>
            <shortName evidence="1">GAT</shortName>
            <ecNumber evidence="1">2.3.1.35</ecNumber>
        </recommendedName>
        <alternativeName>
            <fullName evidence="1">Ornithine acetyltransferase</fullName>
            <shortName evidence="1">OATase</shortName>
        </alternativeName>
        <alternativeName>
            <fullName evidence="1">Ornithine transacetylase</fullName>
        </alternativeName>
    </domain>
    <domain>
        <recommendedName>
            <fullName evidence="1">Amino-acid acetyltransferase</fullName>
            <ecNumber evidence="1">2.3.1.1</ecNumber>
        </recommendedName>
        <alternativeName>
            <fullName evidence="1">N-acetylglutamate synthase</fullName>
            <shortName evidence="1">AGS</shortName>
        </alternativeName>
    </domain>
    <component>
        <recommendedName>
            <fullName evidence="1">Arginine biosynthesis bifunctional protein ArgJ alpha chain</fullName>
        </recommendedName>
    </component>
    <component>
        <recommendedName>
            <fullName evidence="1">Arginine biosynthesis bifunctional protein ArgJ beta chain</fullName>
        </recommendedName>
    </component>
</protein>
<reference key="1">
    <citation type="journal article" date="2008" name="PLoS Genet.">
        <title>Genomic islands in the pathogenic filamentous fungus Aspergillus fumigatus.</title>
        <authorList>
            <person name="Fedorova N.D."/>
            <person name="Khaldi N."/>
            <person name="Joardar V.S."/>
            <person name="Maiti R."/>
            <person name="Amedeo P."/>
            <person name="Anderson M.J."/>
            <person name="Crabtree J."/>
            <person name="Silva J.C."/>
            <person name="Badger J.H."/>
            <person name="Albarraq A."/>
            <person name="Angiuoli S."/>
            <person name="Bussey H."/>
            <person name="Bowyer P."/>
            <person name="Cotty P.J."/>
            <person name="Dyer P.S."/>
            <person name="Egan A."/>
            <person name="Galens K."/>
            <person name="Fraser-Liggett C.M."/>
            <person name="Haas B.J."/>
            <person name="Inman J.M."/>
            <person name="Kent R."/>
            <person name="Lemieux S."/>
            <person name="Malavazi I."/>
            <person name="Orvis J."/>
            <person name="Roemer T."/>
            <person name="Ronning C.M."/>
            <person name="Sundaram J.P."/>
            <person name="Sutton G."/>
            <person name="Turner G."/>
            <person name="Venter J.C."/>
            <person name="White O.R."/>
            <person name="Whitty B.R."/>
            <person name="Youngman P."/>
            <person name="Wolfe K.H."/>
            <person name="Goldman G.H."/>
            <person name="Wortman J.R."/>
            <person name="Jiang B."/>
            <person name="Denning D.W."/>
            <person name="Nierman W.C."/>
        </authorList>
    </citation>
    <scope>NUCLEOTIDE SEQUENCE [LARGE SCALE GENOMIC DNA]</scope>
    <source>
        <strain>ATCC 1007 / CBS 513.65 / DSM 816 / NCTC 3887 / NRRL 1 / QM 1276 / 107</strain>
    </source>
</reference>
<dbReference type="EC" id="2.3.1.35" evidence="1"/>
<dbReference type="EC" id="2.3.1.1" evidence="1"/>
<dbReference type="EMBL" id="DS027049">
    <property type="protein sequence ID" value="EAW12812.1"/>
    <property type="molecule type" value="Genomic_DNA"/>
</dbReference>
<dbReference type="RefSeq" id="XP_001274238.1">
    <property type="nucleotide sequence ID" value="XM_001274237.1"/>
</dbReference>
<dbReference type="SMR" id="A1CAP4"/>
<dbReference type="STRING" id="344612.A1CAP4"/>
<dbReference type="MEROPS" id="T05.001"/>
<dbReference type="EnsemblFungi" id="EAW12812">
    <property type="protein sequence ID" value="EAW12812"/>
    <property type="gene ID" value="ACLA_012400"/>
</dbReference>
<dbReference type="GeneID" id="4706484"/>
<dbReference type="KEGG" id="act:ACLA_012400"/>
<dbReference type="VEuPathDB" id="FungiDB:ACLA_012400"/>
<dbReference type="eggNOG" id="KOG2786">
    <property type="taxonomic scope" value="Eukaryota"/>
</dbReference>
<dbReference type="HOGENOM" id="CLU_027172_1_0_1"/>
<dbReference type="OMA" id="WGRIVMA"/>
<dbReference type="OrthoDB" id="2017946at2759"/>
<dbReference type="UniPathway" id="UPA00068">
    <property type="reaction ID" value="UER00106"/>
</dbReference>
<dbReference type="UniPathway" id="UPA00068">
    <property type="reaction ID" value="UER00111"/>
</dbReference>
<dbReference type="Proteomes" id="UP000006701">
    <property type="component" value="Unassembled WGS sequence"/>
</dbReference>
<dbReference type="GO" id="GO:0005759">
    <property type="term" value="C:mitochondrial matrix"/>
    <property type="evidence" value="ECO:0007669"/>
    <property type="project" value="UniProtKB-SubCell"/>
</dbReference>
<dbReference type="GO" id="GO:0004358">
    <property type="term" value="F:glutamate N-acetyltransferase activity"/>
    <property type="evidence" value="ECO:0007669"/>
    <property type="project" value="UniProtKB-UniRule"/>
</dbReference>
<dbReference type="GO" id="GO:0004042">
    <property type="term" value="F:L-glutamate N-acetyltransferase activity"/>
    <property type="evidence" value="ECO:0007669"/>
    <property type="project" value="UniProtKB-UniRule"/>
</dbReference>
<dbReference type="GO" id="GO:0006526">
    <property type="term" value="P:L-arginine biosynthetic process"/>
    <property type="evidence" value="ECO:0007669"/>
    <property type="project" value="UniProtKB-UniRule"/>
</dbReference>
<dbReference type="GO" id="GO:0006592">
    <property type="term" value="P:ornithine biosynthetic process"/>
    <property type="evidence" value="ECO:0007669"/>
    <property type="project" value="EnsemblFungi"/>
</dbReference>
<dbReference type="CDD" id="cd02152">
    <property type="entry name" value="OAT"/>
    <property type="match status" value="1"/>
</dbReference>
<dbReference type="FunFam" id="3.60.70.12:FF:000001">
    <property type="entry name" value="Arginine biosynthesis bifunctional protein ArgJ, chloroplastic"/>
    <property type="match status" value="1"/>
</dbReference>
<dbReference type="FunFam" id="3.10.20.340:FF:000002">
    <property type="entry name" value="Arginine biosynthesis bifunctional protein ArgJ, mitochondrial"/>
    <property type="match status" value="1"/>
</dbReference>
<dbReference type="FunFam" id="3.30.2330.10:FF:000001">
    <property type="entry name" value="Arginine biosynthesis bifunctional protein ArgJ, mitochondrial"/>
    <property type="match status" value="1"/>
</dbReference>
<dbReference type="Gene3D" id="3.30.2330.10">
    <property type="entry name" value="arginine biosynthesis bifunctional protein suprefamily"/>
    <property type="match status" value="1"/>
</dbReference>
<dbReference type="Gene3D" id="3.10.20.340">
    <property type="entry name" value="ArgJ beta chain, C-terminal domain"/>
    <property type="match status" value="1"/>
</dbReference>
<dbReference type="Gene3D" id="3.60.70.12">
    <property type="entry name" value="L-amino peptidase D-ALA esterase/amidase"/>
    <property type="match status" value="1"/>
</dbReference>
<dbReference type="HAMAP" id="MF_01106">
    <property type="entry name" value="ArgJ"/>
    <property type="match status" value="1"/>
</dbReference>
<dbReference type="InterPro" id="IPR002813">
    <property type="entry name" value="Arg_biosynth_ArgJ"/>
</dbReference>
<dbReference type="InterPro" id="IPR016117">
    <property type="entry name" value="ArgJ-like_dom_sf"/>
</dbReference>
<dbReference type="InterPro" id="IPR042195">
    <property type="entry name" value="ArgJ_beta_C"/>
</dbReference>
<dbReference type="NCBIfam" id="TIGR00120">
    <property type="entry name" value="ArgJ"/>
    <property type="match status" value="1"/>
</dbReference>
<dbReference type="NCBIfam" id="NF003802">
    <property type="entry name" value="PRK05388.1"/>
    <property type="match status" value="1"/>
</dbReference>
<dbReference type="PANTHER" id="PTHR23100">
    <property type="entry name" value="ARGININE BIOSYNTHESIS BIFUNCTIONAL PROTEIN ARGJ"/>
    <property type="match status" value="1"/>
</dbReference>
<dbReference type="PANTHER" id="PTHR23100:SF0">
    <property type="entry name" value="ARGININE BIOSYNTHESIS BIFUNCTIONAL PROTEIN ARGJ, MITOCHONDRIAL"/>
    <property type="match status" value="1"/>
</dbReference>
<dbReference type="Pfam" id="PF01960">
    <property type="entry name" value="ArgJ"/>
    <property type="match status" value="1"/>
</dbReference>
<dbReference type="SUPFAM" id="SSF56266">
    <property type="entry name" value="DmpA/ArgJ-like"/>
    <property type="match status" value="1"/>
</dbReference>
<sequence length="454" mass="47897">MAAFARMVKGQVRNYSAPLDMAIPASKQKYIPSSGSYPKGFLVSGTHVGVKASNTRFPDLALISSETPCSAAAVFTTNKFQAAPVQVSKKTLQERQGQGIRSVVINSGCANAVTGKGGYEDAVNMGKKVDECEGLSKPSTLVMSTGVIGQRLPISKILDKIPTAYANLASTHEAWLTTARAICTTDTFPKLLSRTFTLPSSPGHTYSLAGMTKGAGMIHPNMATLLGVLCTDAPIAPSALQSLLKYAVSRSFNSISVDGDTSTNDTIAVLANGAAGGAPINSASSDDYAAMQEILTSFAQSLSQLVVRDGEGATKFVTVRVQNSPDYDSARLIASTIARSPLVKTALYGRDANWGRILCAIGYTQGVAPGTVVPERTSVSFKPVDGSAVLKLLVNGEPEQVDEERASAILQEEDLEIVVDLGGGEKGELGGEEAVYWFCDFSHEYVTINGDYRT</sequence>
<name>ARGJ_ASPCL</name>
<proteinExistence type="inferred from homology"/>
<organism>
    <name type="scientific">Aspergillus clavatus (strain ATCC 1007 / CBS 513.65 / DSM 816 / NCTC 3887 / NRRL 1 / QM 1276 / 107)</name>
    <dbReference type="NCBI Taxonomy" id="344612"/>
    <lineage>
        <taxon>Eukaryota</taxon>
        <taxon>Fungi</taxon>
        <taxon>Dikarya</taxon>
        <taxon>Ascomycota</taxon>
        <taxon>Pezizomycotina</taxon>
        <taxon>Eurotiomycetes</taxon>
        <taxon>Eurotiomycetidae</taxon>
        <taxon>Eurotiales</taxon>
        <taxon>Aspergillaceae</taxon>
        <taxon>Aspergillus</taxon>
        <taxon>Aspergillus subgen. Fumigati</taxon>
    </lineage>
</organism>
<gene>
    <name type="ORF">ACLA_012400</name>
</gene>
<feature type="chain" id="PRO_0000398012" description="Arginine biosynthesis bifunctional protein ArgJ alpha chain" evidence="1">
    <location>
        <begin position="1"/>
        <end position="223"/>
    </location>
</feature>
<feature type="chain" id="PRO_0000398013" description="Arginine biosynthesis bifunctional protein ArgJ beta chain" evidence="1">
    <location>
        <begin position="224"/>
        <end position="454"/>
    </location>
</feature>
<feature type="active site" description="Nucleophile" evidence="1">
    <location>
        <position position="224"/>
    </location>
</feature>
<feature type="binding site" evidence="1">
    <location>
        <position position="184"/>
    </location>
    <ligand>
        <name>substrate</name>
    </ligand>
</feature>
<feature type="binding site" evidence="1">
    <location>
        <position position="213"/>
    </location>
    <ligand>
        <name>substrate</name>
    </ligand>
</feature>
<feature type="binding site" evidence="1">
    <location>
        <position position="224"/>
    </location>
    <ligand>
        <name>substrate</name>
    </ligand>
</feature>
<feature type="binding site" evidence="1">
    <location>
        <position position="311"/>
    </location>
    <ligand>
        <name>substrate</name>
    </ligand>
</feature>
<feature type="binding site" evidence="1">
    <location>
        <position position="449"/>
    </location>
    <ligand>
        <name>substrate</name>
    </ligand>
</feature>
<feature type="binding site" evidence="1">
    <location>
        <position position="454"/>
    </location>
    <ligand>
        <name>substrate</name>
    </ligand>
</feature>
<feature type="site" description="Involved in the stabilization of negative charge on the oxyanion by the formation of the oxyanion hole" evidence="1">
    <location>
        <position position="145"/>
    </location>
</feature>
<feature type="site" description="Involved in the stabilization of negative charge on the oxyanion by the formation of the oxyanion hole" evidence="1">
    <location>
        <position position="146"/>
    </location>
</feature>
<feature type="site" description="Cleavage; by autolysis" evidence="1">
    <location>
        <begin position="223"/>
        <end position="224"/>
    </location>
</feature>
<evidence type="ECO:0000255" key="1">
    <source>
        <dbReference type="HAMAP-Rule" id="MF_03124"/>
    </source>
</evidence>
<accession>A1CAP4</accession>
<comment type="function">
    <text evidence="1">Catalyzes two activities which are involved in the cyclic version of arginine biosynthesis: the synthesis of acetylglutamate from glutamate and acetyl-CoA, and of ornithine by transacetylation between acetylornithine and glutamate.</text>
</comment>
<comment type="catalytic activity">
    <reaction evidence="1">
        <text>N(2)-acetyl-L-ornithine + L-glutamate = N-acetyl-L-glutamate + L-ornithine</text>
        <dbReference type="Rhea" id="RHEA:15349"/>
        <dbReference type="ChEBI" id="CHEBI:29985"/>
        <dbReference type="ChEBI" id="CHEBI:44337"/>
        <dbReference type="ChEBI" id="CHEBI:46911"/>
        <dbReference type="ChEBI" id="CHEBI:57805"/>
        <dbReference type="EC" id="2.3.1.35"/>
    </reaction>
</comment>
<comment type="catalytic activity">
    <reaction evidence="1">
        <text>L-glutamate + acetyl-CoA = N-acetyl-L-glutamate + CoA + H(+)</text>
        <dbReference type="Rhea" id="RHEA:24292"/>
        <dbReference type="ChEBI" id="CHEBI:15378"/>
        <dbReference type="ChEBI" id="CHEBI:29985"/>
        <dbReference type="ChEBI" id="CHEBI:44337"/>
        <dbReference type="ChEBI" id="CHEBI:57287"/>
        <dbReference type="ChEBI" id="CHEBI:57288"/>
        <dbReference type="EC" id="2.3.1.1"/>
    </reaction>
</comment>
<comment type="pathway">
    <text evidence="1">Amino-acid biosynthesis; L-arginine biosynthesis; L-ornithine and N-acetyl-L-glutamate from L-glutamate and N(2)-acetyl-L-ornithine (cyclic): step 1/1.</text>
</comment>
<comment type="pathway">
    <text evidence="1">Amino-acid biosynthesis; L-arginine biosynthesis; N(2)-acetyl-L-ornithine from L-glutamate: step 1/4.</text>
</comment>
<comment type="subunit">
    <text evidence="1">Heterodimer of an alpha and a beta chain.</text>
</comment>
<comment type="subcellular location">
    <subcellularLocation>
        <location evidence="1">Mitochondrion matrix</location>
    </subcellularLocation>
</comment>
<comment type="PTM">
    <text evidence="1">The alpha and beta chains are autoproteolytically processed from a single precursor protein within the mitochondrion.</text>
</comment>
<comment type="miscellaneous">
    <text evidence="1">This protein may be expected to contain an N-terminal transit peptide but none has been predicted.</text>
</comment>
<comment type="similarity">
    <text evidence="1">Belongs to the ArgJ family.</text>
</comment>
<keyword id="KW-0012">Acyltransferase</keyword>
<keyword id="KW-0028">Amino-acid biosynthesis</keyword>
<keyword id="KW-0055">Arginine biosynthesis</keyword>
<keyword id="KW-0068">Autocatalytic cleavage</keyword>
<keyword id="KW-0496">Mitochondrion</keyword>
<keyword id="KW-0511">Multifunctional enzyme</keyword>
<keyword id="KW-1185">Reference proteome</keyword>
<keyword id="KW-0808">Transferase</keyword>